<reference key="1">
    <citation type="journal article" date="1993" name="Nucleic Acids Res.">
        <title>Nucleotide sequence of a Trypanosoma cruzi cDNA encoding a protein homologous to mammalian EF1 gamma.</title>
        <authorList>
            <person name="Billaut-Mulot O."/>
            <person name="Pommier V."/>
            <person name="Schoeneck R."/>
            <person name="Plumas-Marty B."/>
            <person name="Taibi A."/>
            <person name="Loyens M."/>
            <person name="Capron A."/>
            <person name="Ouaissi M.A."/>
        </authorList>
    </citation>
    <scope>NUCLEOTIDE SEQUENCE [MRNA]</scope>
    <source>
        <strain>Y</strain>
    </source>
</reference>
<keyword id="KW-0251">Elongation factor</keyword>
<keyword id="KW-0648">Protein biosynthesis</keyword>
<organism>
    <name type="scientific">Trypanosoma cruzi</name>
    <dbReference type="NCBI Taxonomy" id="5693"/>
    <lineage>
        <taxon>Eukaryota</taxon>
        <taxon>Discoba</taxon>
        <taxon>Euglenozoa</taxon>
        <taxon>Kinetoplastea</taxon>
        <taxon>Metakinetoplastina</taxon>
        <taxon>Trypanosomatida</taxon>
        <taxon>Trypanosomatidae</taxon>
        <taxon>Trypanosoma</taxon>
        <taxon>Schizotrypanum</taxon>
    </lineage>
</organism>
<name>EF1G_TRYCR</name>
<evidence type="ECO:0000255" key="1">
    <source>
        <dbReference type="PROSITE-ProRule" id="PRU00519"/>
    </source>
</evidence>
<evidence type="ECO:0000256" key="2">
    <source>
        <dbReference type="SAM" id="MobiDB-lite"/>
    </source>
</evidence>
<proteinExistence type="evidence at transcript level"/>
<feature type="chain" id="PRO_0000208825" description="Elongation factor 1-gamma">
    <location>
        <begin position="1"/>
        <end position="411"/>
    </location>
</feature>
<feature type="domain" description="GST N-terminal">
    <location>
        <begin position="3"/>
        <end position="84"/>
    </location>
</feature>
<feature type="domain" description="GST C-terminal">
    <location>
        <begin position="90"/>
        <end position="216"/>
    </location>
</feature>
<feature type="domain" description="EF-1-gamma C-terminal" evidence="1">
    <location>
        <begin position="255"/>
        <end position="411"/>
    </location>
</feature>
<feature type="region of interest" description="Disordered" evidence="2">
    <location>
        <begin position="212"/>
        <end position="265"/>
    </location>
</feature>
<feature type="compositionally biased region" description="Gly residues" evidence="2">
    <location>
        <begin position="214"/>
        <end position="223"/>
    </location>
</feature>
<sequence length="411" mass="46567">MSLTLWSGVNPENARTHKLLAAAALANVAVTLKACEYGRENETAEYCRNCSPCGRYPVLQTEEGCVFESNAILRHIARLDRSGGFLYGRTPLEGSQVDMWLDFSATELDAASEPFVHHAFRGEPLPANAMDRVHEVLRALEAWLETRTFLVGERMTVADVAVAFALQWHYRLNGAEGEALTKKYRNAYRMYNTVMQQPKTVEVLRSQGATFGAREGGAKGQGRGCARPGREEAERAAAAADGAEEEDEAPREKKKPNPLDELPPSPFVLDAFKREYSNTDTRTVAAPYFFQHYDAAGYTTFWCRYKYNEDNKMQFMTANLIRGWFQRMEHVRKYAFGVALIIGEERRHDIVALWVFRGRGMPAIVEDVEDTELFDWEEVADVAAQRERITDYLSWEGPTIPRPVLEGRVFK</sequence>
<dbReference type="EMBL" id="L17307">
    <property type="protein sequence ID" value="AAA02936.1"/>
    <property type="molecule type" value="mRNA"/>
</dbReference>
<dbReference type="PIR" id="S41648">
    <property type="entry name" value="S41648"/>
</dbReference>
<dbReference type="SMR" id="P34715"/>
<dbReference type="VEuPathDB" id="TriTrypDB:BCY84_19291"/>
<dbReference type="VEuPathDB" id="TriTrypDB:C3747_8g439"/>
<dbReference type="VEuPathDB" id="TriTrypDB:C4B63_138g2"/>
<dbReference type="VEuPathDB" id="TriTrypDB:ECC02_011976"/>
<dbReference type="VEuPathDB" id="TriTrypDB:Tc_MARK_5290"/>
<dbReference type="VEuPathDB" id="TriTrypDB:TcBrA4_0053310"/>
<dbReference type="VEuPathDB" id="TriTrypDB:TcCL_NonESM09704"/>
<dbReference type="VEuPathDB" id="TriTrypDB:TcCLB.508221.670"/>
<dbReference type="VEuPathDB" id="TriTrypDB:TcCLB.508261.140"/>
<dbReference type="VEuPathDB" id="TriTrypDB:TcCLB.508761.229"/>
<dbReference type="VEuPathDB" id="TriTrypDB:TcCLB.510037.5"/>
<dbReference type="VEuPathDB" id="TriTrypDB:TcCLB.510163.20"/>
<dbReference type="VEuPathDB" id="TriTrypDB:TcCLB.510463.160"/>
<dbReference type="VEuPathDB" id="TriTrypDB:TCDM_05825"/>
<dbReference type="VEuPathDB" id="TriTrypDB:TCDM_13097"/>
<dbReference type="VEuPathDB" id="TriTrypDB:TcG_09233"/>
<dbReference type="VEuPathDB" id="TriTrypDB:TCSYLVIO_006565"/>
<dbReference type="VEuPathDB" id="TriTrypDB:TcYC6_0037310"/>
<dbReference type="GO" id="GO:0005737">
    <property type="term" value="C:cytoplasm"/>
    <property type="evidence" value="ECO:0007669"/>
    <property type="project" value="TreeGrafter"/>
</dbReference>
<dbReference type="GO" id="GO:0005634">
    <property type="term" value="C:nucleus"/>
    <property type="evidence" value="ECO:0007669"/>
    <property type="project" value="TreeGrafter"/>
</dbReference>
<dbReference type="GO" id="GO:0003746">
    <property type="term" value="F:translation elongation factor activity"/>
    <property type="evidence" value="ECO:0007669"/>
    <property type="project" value="UniProtKB-KW"/>
</dbReference>
<dbReference type="CDD" id="cd03181">
    <property type="entry name" value="GST_C_EF1Bgamma_like"/>
    <property type="match status" value="1"/>
</dbReference>
<dbReference type="FunFam" id="3.30.70.1010:FF:000001">
    <property type="entry name" value="Elongation factor 1-gamma 1"/>
    <property type="match status" value="1"/>
</dbReference>
<dbReference type="FunFam" id="3.40.30.10:FF:000148">
    <property type="entry name" value="Elongation factor 1B gamma"/>
    <property type="match status" value="1"/>
</dbReference>
<dbReference type="FunFam" id="1.20.1050.10:FF:000069">
    <property type="entry name" value="Putative elongation factor 1-gamma"/>
    <property type="match status" value="1"/>
</dbReference>
<dbReference type="Gene3D" id="1.20.1050.10">
    <property type="match status" value="1"/>
</dbReference>
<dbReference type="Gene3D" id="3.40.30.10">
    <property type="entry name" value="Glutaredoxin"/>
    <property type="match status" value="1"/>
</dbReference>
<dbReference type="Gene3D" id="3.30.70.1010">
    <property type="entry name" value="Translation elongation factor EF1B, gamma chain, conserved domain"/>
    <property type="match status" value="1"/>
</dbReference>
<dbReference type="InterPro" id="IPR050802">
    <property type="entry name" value="EF-GSTs"/>
</dbReference>
<dbReference type="InterPro" id="IPR001662">
    <property type="entry name" value="EF1B_G_C"/>
</dbReference>
<dbReference type="InterPro" id="IPR036433">
    <property type="entry name" value="EF1B_G_C_sf"/>
</dbReference>
<dbReference type="InterPro" id="IPR010987">
    <property type="entry name" value="Glutathione-S-Trfase_C-like"/>
</dbReference>
<dbReference type="InterPro" id="IPR036282">
    <property type="entry name" value="Glutathione-S-Trfase_C_sf"/>
</dbReference>
<dbReference type="InterPro" id="IPR040079">
    <property type="entry name" value="Glutathione_S-Trfase"/>
</dbReference>
<dbReference type="InterPro" id="IPR004045">
    <property type="entry name" value="Glutathione_S-Trfase_N"/>
</dbReference>
<dbReference type="InterPro" id="IPR004046">
    <property type="entry name" value="GST_C"/>
</dbReference>
<dbReference type="InterPro" id="IPR036249">
    <property type="entry name" value="Thioredoxin-like_sf"/>
</dbReference>
<dbReference type="PANTHER" id="PTHR43986">
    <property type="entry name" value="ELONGATION FACTOR 1-GAMMA"/>
    <property type="match status" value="1"/>
</dbReference>
<dbReference type="PANTHER" id="PTHR43986:SF9">
    <property type="entry name" value="FACTOR 1 GAMMA, PUTATIVE-RELATED"/>
    <property type="match status" value="1"/>
</dbReference>
<dbReference type="Pfam" id="PF00647">
    <property type="entry name" value="EF1G"/>
    <property type="match status" value="1"/>
</dbReference>
<dbReference type="Pfam" id="PF00043">
    <property type="entry name" value="GST_C"/>
    <property type="match status" value="1"/>
</dbReference>
<dbReference type="Pfam" id="PF02798">
    <property type="entry name" value="GST_N"/>
    <property type="match status" value="1"/>
</dbReference>
<dbReference type="SFLD" id="SFLDS00019">
    <property type="entry name" value="Glutathione_Transferase_(cytos"/>
    <property type="match status" value="1"/>
</dbReference>
<dbReference type="SFLD" id="SFLDG00358">
    <property type="entry name" value="Main_(cytGST)"/>
    <property type="match status" value="1"/>
</dbReference>
<dbReference type="SMART" id="SM01183">
    <property type="entry name" value="EF1G"/>
    <property type="match status" value="1"/>
</dbReference>
<dbReference type="SUPFAM" id="SSF89942">
    <property type="entry name" value="eEF1-gamma domain"/>
    <property type="match status" value="1"/>
</dbReference>
<dbReference type="SUPFAM" id="SSF47616">
    <property type="entry name" value="GST C-terminal domain-like"/>
    <property type="match status" value="1"/>
</dbReference>
<dbReference type="SUPFAM" id="SSF52833">
    <property type="entry name" value="Thioredoxin-like"/>
    <property type="match status" value="1"/>
</dbReference>
<dbReference type="PROSITE" id="PS50040">
    <property type="entry name" value="EF1G_C"/>
    <property type="match status" value="1"/>
</dbReference>
<dbReference type="PROSITE" id="PS50405">
    <property type="entry name" value="GST_CTER"/>
    <property type="match status" value="1"/>
</dbReference>
<dbReference type="PROSITE" id="PS50404">
    <property type="entry name" value="GST_NTER"/>
    <property type="match status" value="1"/>
</dbReference>
<accession>P34715</accession>
<comment type="function">
    <text>Probably plays a role in anchoring the complex to other cellular components.</text>
</comment>
<comment type="subunit">
    <text>EF-1 is composed of four subunits: alpha, beta, delta, and gamma.</text>
</comment>
<protein>
    <recommendedName>
        <fullName>Elongation factor 1-gamma</fullName>
        <shortName>EF-1-gamma</shortName>
    </recommendedName>
    <alternativeName>
        <fullName>eEF-1B gamma</fullName>
    </alternativeName>
</protein>